<protein>
    <recommendedName>
        <fullName evidence="1">Recombination-associated protein RdgC</fullName>
    </recommendedName>
</protein>
<evidence type="ECO:0000255" key="1">
    <source>
        <dbReference type="HAMAP-Rule" id="MF_00194"/>
    </source>
</evidence>
<gene>
    <name evidence="1" type="primary">rdgC</name>
    <name type="ordered locus">SF0331</name>
    <name type="ordered locus">S0339</name>
</gene>
<feature type="chain" id="PRO_1000021240" description="Recombination-associated protein RdgC">
    <location>
        <begin position="1"/>
        <end position="303"/>
    </location>
</feature>
<sequence length="303" mass="33993">MLWFKNLMVYRLSREISLRAEEMEKQLASMAFTPCGSQDMAKMGWVPPMGSHSDALTHVANGQIVICARKEEKILPSPVIKQALEAKIAKLEAEQARKLKKTEKDSLKDEVLHSLLPRAFSRFSQTMMWLDTVNGLIMVDCASAKKAEDTLALLRKSLGSLPVVPLSMENPIELTLTEWVRSGSAAQGFQLLDEAELKSLLEDGGVIRAKKQDLTSEEITNHIEAGKVVTKLALDWQQRIQFVMCDDGSLKRLKFCDELRDQNEDIDREDFAQRFDADFILMTGELAALIQNLIEGLGGEAQR</sequence>
<name>RDGC_SHIFL</name>
<comment type="function">
    <text evidence="1">May be involved in recombination.</text>
</comment>
<comment type="subcellular location">
    <subcellularLocation>
        <location evidence="1">Cytoplasm</location>
        <location evidence="1">Nucleoid</location>
    </subcellularLocation>
</comment>
<comment type="similarity">
    <text evidence="1">Belongs to the RdgC family.</text>
</comment>
<organism>
    <name type="scientific">Shigella flexneri</name>
    <dbReference type="NCBI Taxonomy" id="623"/>
    <lineage>
        <taxon>Bacteria</taxon>
        <taxon>Pseudomonadati</taxon>
        <taxon>Pseudomonadota</taxon>
        <taxon>Gammaproteobacteria</taxon>
        <taxon>Enterobacterales</taxon>
        <taxon>Enterobacteriaceae</taxon>
        <taxon>Shigella</taxon>
    </lineage>
</organism>
<dbReference type="EMBL" id="AE005674">
    <property type="protein sequence ID" value="AAN41989.2"/>
    <property type="molecule type" value="Genomic_DNA"/>
</dbReference>
<dbReference type="EMBL" id="AE014073">
    <property type="protein sequence ID" value="AAP15867.1"/>
    <property type="molecule type" value="Genomic_DNA"/>
</dbReference>
<dbReference type="RefSeq" id="NP_706282.2">
    <property type="nucleotide sequence ID" value="NC_004337.2"/>
</dbReference>
<dbReference type="RefSeq" id="WP_005053105.1">
    <property type="nucleotide sequence ID" value="NZ_WPGW01000023.1"/>
</dbReference>
<dbReference type="SMR" id="Q83M63"/>
<dbReference type="STRING" id="198214.SF0331"/>
<dbReference type="PaxDb" id="198214-SF0331"/>
<dbReference type="DNASU" id="1076772"/>
<dbReference type="GeneID" id="1027650"/>
<dbReference type="KEGG" id="sfl:SF0331"/>
<dbReference type="KEGG" id="sfx:S0339"/>
<dbReference type="PATRIC" id="fig|198214.7.peg.378"/>
<dbReference type="HOGENOM" id="CLU_052038_1_1_6"/>
<dbReference type="Proteomes" id="UP000001006">
    <property type="component" value="Chromosome"/>
</dbReference>
<dbReference type="Proteomes" id="UP000002673">
    <property type="component" value="Chromosome"/>
</dbReference>
<dbReference type="GO" id="GO:0043590">
    <property type="term" value="C:bacterial nucleoid"/>
    <property type="evidence" value="ECO:0007669"/>
    <property type="project" value="TreeGrafter"/>
</dbReference>
<dbReference type="GO" id="GO:0005737">
    <property type="term" value="C:cytoplasm"/>
    <property type="evidence" value="ECO:0007669"/>
    <property type="project" value="UniProtKB-UniRule"/>
</dbReference>
<dbReference type="GO" id="GO:0003690">
    <property type="term" value="F:double-stranded DNA binding"/>
    <property type="evidence" value="ECO:0007669"/>
    <property type="project" value="TreeGrafter"/>
</dbReference>
<dbReference type="GO" id="GO:0006310">
    <property type="term" value="P:DNA recombination"/>
    <property type="evidence" value="ECO:0007669"/>
    <property type="project" value="UniProtKB-UniRule"/>
</dbReference>
<dbReference type="GO" id="GO:0000018">
    <property type="term" value="P:regulation of DNA recombination"/>
    <property type="evidence" value="ECO:0007669"/>
    <property type="project" value="TreeGrafter"/>
</dbReference>
<dbReference type="HAMAP" id="MF_00194">
    <property type="entry name" value="RdgC"/>
    <property type="match status" value="1"/>
</dbReference>
<dbReference type="InterPro" id="IPR007476">
    <property type="entry name" value="RdgC"/>
</dbReference>
<dbReference type="NCBIfam" id="NF001460">
    <property type="entry name" value="PRK00321.1-1"/>
    <property type="match status" value="1"/>
</dbReference>
<dbReference type="NCBIfam" id="NF001462">
    <property type="entry name" value="PRK00321.1-3"/>
    <property type="match status" value="1"/>
</dbReference>
<dbReference type="NCBIfam" id="NF001464">
    <property type="entry name" value="PRK00321.1-5"/>
    <property type="match status" value="1"/>
</dbReference>
<dbReference type="PANTHER" id="PTHR38103">
    <property type="entry name" value="RECOMBINATION-ASSOCIATED PROTEIN RDGC"/>
    <property type="match status" value="1"/>
</dbReference>
<dbReference type="PANTHER" id="PTHR38103:SF1">
    <property type="entry name" value="RECOMBINATION-ASSOCIATED PROTEIN RDGC"/>
    <property type="match status" value="1"/>
</dbReference>
<dbReference type="Pfam" id="PF04381">
    <property type="entry name" value="RdgC"/>
    <property type="match status" value="1"/>
</dbReference>
<accession>Q83M63</accession>
<accession>Q7UDK4</accession>
<keyword id="KW-0963">Cytoplasm</keyword>
<keyword id="KW-0233">DNA recombination</keyword>
<keyword id="KW-1185">Reference proteome</keyword>
<reference key="1">
    <citation type="journal article" date="2002" name="Nucleic Acids Res.">
        <title>Genome sequence of Shigella flexneri 2a: insights into pathogenicity through comparison with genomes of Escherichia coli K12 and O157.</title>
        <authorList>
            <person name="Jin Q."/>
            <person name="Yuan Z."/>
            <person name="Xu J."/>
            <person name="Wang Y."/>
            <person name="Shen Y."/>
            <person name="Lu W."/>
            <person name="Wang J."/>
            <person name="Liu H."/>
            <person name="Yang J."/>
            <person name="Yang F."/>
            <person name="Zhang X."/>
            <person name="Zhang J."/>
            <person name="Yang G."/>
            <person name="Wu H."/>
            <person name="Qu D."/>
            <person name="Dong J."/>
            <person name="Sun L."/>
            <person name="Xue Y."/>
            <person name="Zhao A."/>
            <person name="Gao Y."/>
            <person name="Zhu J."/>
            <person name="Kan B."/>
            <person name="Ding K."/>
            <person name="Chen S."/>
            <person name="Cheng H."/>
            <person name="Yao Z."/>
            <person name="He B."/>
            <person name="Chen R."/>
            <person name="Ma D."/>
            <person name="Qiang B."/>
            <person name="Wen Y."/>
            <person name="Hou Y."/>
            <person name="Yu J."/>
        </authorList>
    </citation>
    <scope>NUCLEOTIDE SEQUENCE [LARGE SCALE GENOMIC DNA]</scope>
    <source>
        <strain>301 / Serotype 2a</strain>
    </source>
</reference>
<reference key="2">
    <citation type="journal article" date="2003" name="Infect. Immun.">
        <title>Complete genome sequence and comparative genomics of Shigella flexneri serotype 2a strain 2457T.</title>
        <authorList>
            <person name="Wei J."/>
            <person name="Goldberg M.B."/>
            <person name="Burland V."/>
            <person name="Venkatesan M.M."/>
            <person name="Deng W."/>
            <person name="Fournier G."/>
            <person name="Mayhew G.F."/>
            <person name="Plunkett G. III"/>
            <person name="Rose D.J."/>
            <person name="Darling A."/>
            <person name="Mau B."/>
            <person name="Perna N.T."/>
            <person name="Payne S.M."/>
            <person name="Runyen-Janecky L.J."/>
            <person name="Zhou S."/>
            <person name="Schwartz D.C."/>
            <person name="Blattner F.R."/>
        </authorList>
    </citation>
    <scope>NUCLEOTIDE SEQUENCE [LARGE SCALE GENOMIC DNA]</scope>
    <source>
        <strain>ATCC 700930 / 2457T / Serotype 2a</strain>
    </source>
</reference>
<proteinExistence type="inferred from homology"/>